<proteinExistence type="inferred from homology"/>
<name>ISPH_GEOSW</name>
<comment type="function">
    <text evidence="1">Catalyzes the conversion of 1-hydroxy-2-methyl-2-(E)-butenyl 4-diphosphate (HMBPP) into a mixture of isopentenyl diphosphate (IPP) and dimethylallyl diphosphate (DMAPP). Acts in the terminal step of the DOXP/MEP pathway for isoprenoid precursor biosynthesis.</text>
</comment>
<comment type="catalytic activity">
    <reaction evidence="1">
        <text>isopentenyl diphosphate + 2 oxidized [2Fe-2S]-[ferredoxin] + H2O = (2E)-4-hydroxy-3-methylbut-2-enyl diphosphate + 2 reduced [2Fe-2S]-[ferredoxin] + 2 H(+)</text>
        <dbReference type="Rhea" id="RHEA:24488"/>
        <dbReference type="Rhea" id="RHEA-COMP:10000"/>
        <dbReference type="Rhea" id="RHEA-COMP:10001"/>
        <dbReference type="ChEBI" id="CHEBI:15377"/>
        <dbReference type="ChEBI" id="CHEBI:15378"/>
        <dbReference type="ChEBI" id="CHEBI:33737"/>
        <dbReference type="ChEBI" id="CHEBI:33738"/>
        <dbReference type="ChEBI" id="CHEBI:128753"/>
        <dbReference type="ChEBI" id="CHEBI:128769"/>
        <dbReference type="EC" id="1.17.7.4"/>
    </reaction>
</comment>
<comment type="catalytic activity">
    <reaction evidence="1">
        <text>dimethylallyl diphosphate + 2 oxidized [2Fe-2S]-[ferredoxin] + H2O = (2E)-4-hydroxy-3-methylbut-2-enyl diphosphate + 2 reduced [2Fe-2S]-[ferredoxin] + 2 H(+)</text>
        <dbReference type="Rhea" id="RHEA:24825"/>
        <dbReference type="Rhea" id="RHEA-COMP:10000"/>
        <dbReference type="Rhea" id="RHEA-COMP:10001"/>
        <dbReference type="ChEBI" id="CHEBI:15377"/>
        <dbReference type="ChEBI" id="CHEBI:15378"/>
        <dbReference type="ChEBI" id="CHEBI:33737"/>
        <dbReference type="ChEBI" id="CHEBI:33738"/>
        <dbReference type="ChEBI" id="CHEBI:57623"/>
        <dbReference type="ChEBI" id="CHEBI:128753"/>
        <dbReference type="EC" id="1.17.7.4"/>
    </reaction>
</comment>
<comment type="cofactor">
    <cofactor evidence="1">
        <name>[4Fe-4S] cluster</name>
        <dbReference type="ChEBI" id="CHEBI:49883"/>
    </cofactor>
    <text evidence="1">Binds 1 [4Fe-4S] cluster per subunit.</text>
</comment>
<comment type="pathway">
    <text evidence="1">Isoprenoid biosynthesis; dimethylallyl diphosphate biosynthesis; dimethylallyl diphosphate from (2E)-4-hydroxy-3-methylbutenyl diphosphate: step 1/1.</text>
</comment>
<comment type="pathway">
    <text evidence="1">Isoprenoid biosynthesis; isopentenyl diphosphate biosynthesis via DXP pathway; isopentenyl diphosphate from 1-deoxy-D-xylulose 5-phosphate: step 6/6.</text>
</comment>
<comment type="similarity">
    <text evidence="1">Belongs to the IspH family.</text>
</comment>
<feature type="chain" id="PRO_1000204005" description="4-hydroxy-3-methylbut-2-enyl diphosphate reductase">
    <location>
        <begin position="1"/>
        <end position="315"/>
    </location>
</feature>
<feature type="active site" description="Proton donor" evidence="1">
    <location>
        <position position="133"/>
    </location>
</feature>
<feature type="binding site" evidence="1">
    <location>
        <position position="12"/>
    </location>
    <ligand>
        <name>[4Fe-4S] cluster</name>
        <dbReference type="ChEBI" id="CHEBI:49883"/>
    </ligand>
</feature>
<feature type="binding site" evidence="1">
    <location>
        <position position="43"/>
    </location>
    <ligand>
        <name>(2E)-4-hydroxy-3-methylbut-2-enyl diphosphate</name>
        <dbReference type="ChEBI" id="CHEBI:128753"/>
    </ligand>
</feature>
<feature type="binding site" evidence="1">
    <location>
        <position position="43"/>
    </location>
    <ligand>
        <name>dimethylallyl diphosphate</name>
        <dbReference type="ChEBI" id="CHEBI:57623"/>
    </ligand>
</feature>
<feature type="binding site" evidence="1">
    <location>
        <position position="43"/>
    </location>
    <ligand>
        <name>isopentenyl diphosphate</name>
        <dbReference type="ChEBI" id="CHEBI:128769"/>
    </ligand>
</feature>
<feature type="binding site" evidence="1">
    <location>
        <position position="81"/>
    </location>
    <ligand>
        <name>(2E)-4-hydroxy-3-methylbut-2-enyl diphosphate</name>
        <dbReference type="ChEBI" id="CHEBI:128753"/>
    </ligand>
</feature>
<feature type="binding site" evidence="1">
    <location>
        <position position="81"/>
    </location>
    <ligand>
        <name>dimethylallyl diphosphate</name>
        <dbReference type="ChEBI" id="CHEBI:57623"/>
    </ligand>
</feature>
<feature type="binding site" evidence="1">
    <location>
        <position position="81"/>
    </location>
    <ligand>
        <name>isopentenyl diphosphate</name>
        <dbReference type="ChEBI" id="CHEBI:128769"/>
    </ligand>
</feature>
<feature type="binding site" evidence="1">
    <location>
        <position position="103"/>
    </location>
    <ligand>
        <name>[4Fe-4S] cluster</name>
        <dbReference type="ChEBI" id="CHEBI:49883"/>
    </ligand>
</feature>
<feature type="binding site" evidence="1">
    <location>
        <position position="131"/>
    </location>
    <ligand>
        <name>(2E)-4-hydroxy-3-methylbut-2-enyl diphosphate</name>
        <dbReference type="ChEBI" id="CHEBI:128753"/>
    </ligand>
</feature>
<feature type="binding site" evidence="1">
    <location>
        <position position="131"/>
    </location>
    <ligand>
        <name>dimethylallyl diphosphate</name>
        <dbReference type="ChEBI" id="CHEBI:57623"/>
    </ligand>
</feature>
<feature type="binding site" evidence="1">
    <location>
        <position position="131"/>
    </location>
    <ligand>
        <name>isopentenyl diphosphate</name>
        <dbReference type="ChEBI" id="CHEBI:128769"/>
    </ligand>
</feature>
<feature type="binding site" evidence="1">
    <location>
        <position position="170"/>
    </location>
    <ligand>
        <name>(2E)-4-hydroxy-3-methylbut-2-enyl diphosphate</name>
        <dbReference type="ChEBI" id="CHEBI:128753"/>
    </ligand>
</feature>
<feature type="binding site" evidence="1">
    <location>
        <position position="198"/>
    </location>
    <ligand>
        <name>[4Fe-4S] cluster</name>
        <dbReference type="ChEBI" id="CHEBI:49883"/>
    </ligand>
</feature>
<feature type="binding site" evidence="1">
    <location>
        <position position="226"/>
    </location>
    <ligand>
        <name>(2E)-4-hydroxy-3-methylbut-2-enyl diphosphate</name>
        <dbReference type="ChEBI" id="CHEBI:128753"/>
    </ligand>
</feature>
<feature type="binding site" evidence="1">
    <location>
        <position position="226"/>
    </location>
    <ligand>
        <name>dimethylallyl diphosphate</name>
        <dbReference type="ChEBI" id="CHEBI:57623"/>
    </ligand>
</feature>
<feature type="binding site" evidence="1">
    <location>
        <position position="226"/>
    </location>
    <ligand>
        <name>isopentenyl diphosphate</name>
        <dbReference type="ChEBI" id="CHEBI:128769"/>
    </ligand>
</feature>
<feature type="binding site" evidence="1">
    <location>
        <position position="228"/>
    </location>
    <ligand>
        <name>(2E)-4-hydroxy-3-methylbut-2-enyl diphosphate</name>
        <dbReference type="ChEBI" id="CHEBI:128753"/>
    </ligand>
</feature>
<feature type="binding site" evidence="1">
    <location>
        <position position="228"/>
    </location>
    <ligand>
        <name>dimethylallyl diphosphate</name>
        <dbReference type="ChEBI" id="CHEBI:57623"/>
    </ligand>
</feature>
<feature type="binding site" evidence="1">
    <location>
        <position position="228"/>
    </location>
    <ligand>
        <name>isopentenyl diphosphate</name>
        <dbReference type="ChEBI" id="CHEBI:128769"/>
    </ligand>
</feature>
<feature type="binding site" evidence="1">
    <location>
        <position position="271"/>
    </location>
    <ligand>
        <name>(2E)-4-hydroxy-3-methylbut-2-enyl diphosphate</name>
        <dbReference type="ChEBI" id="CHEBI:128753"/>
    </ligand>
</feature>
<feature type="binding site" evidence="1">
    <location>
        <position position="271"/>
    </location>
    <ligand>
        <name>dimethylallyl diphosphate</name>
        <dbReference type="ChEBI" id="CHEBI:57623"/>
    </ligand>
</feature>
<feature type="binding site" evidence="1">
    <location>
        <position position="271"/>
    </location>
    <ligand>
        <name>isopentenyl diphosphate</name>
        <dbReference type="ChEBI" id="CHEBI:128769"/>
    </ligand>
</feature>
<sequence>MEVIKITPRGYCYGVVDAMVIARNVALDPTLPRPIYILGMIVHNKHVTDAFAEEGIITLDGENRLEILEKIDKGTVIFTAHGVSPEVKRRAREKGLVTIDATCPDVTKTHNLIKEKLADGYEIIYIGKKGHPEPEGAVGIDPTRIHLVETMEDVERLTIENDRIMVTNQTTMSQWDVADIMAKVKEKYPHVEMHKEICMATQLRQEAVAEQAKDADVTIVVGDPRSNNSNRLAQVSEEIAGTKAYRVADVTEIDINWIKDAKKVAVTAGASTPTPITKEVIDFLEQFDPNDPNTWKRERKVPLQKILPKVKAKKE</sequence>
<organism>
    <name type="scientific">Geobacillus sp. (strain WCH70)</name>
    <dbReference type="NCBI Taxonomy" id="471223"/>
    <lineage>
        <taxon>Bacteria</taxon>
        <taxon>Bacillati</taxon>
        <taxon>Bacillota</taxon>
        <taxon>Bacilli</taxon>
        <taxon>Bacillales</taxon>
        <taxon>Anoxybacillaceae</taxon>
        <taxon>Geobacillus</taxon>
    </lineage>
</organism>
<protein>
    <recommendedName>
        <fullName evidence="1">4-hydroxy-3-methylbut-2-enyl diphosphate reductase</fullName>
        <shortName evidence="1">HMBPP reductase</shortName>
        <ecNumber evidence="1">1.17.7.4</ecNumber>
    </recommendedName>
</protein>
<evidence type="ECO:0000255" key="1">
    <source>
        <dbReference type="HAMAP-Rule" id="MF_00191"/>
    </source>
</evidence>
<reference key="1">
    <citation type="submission" date="2009-06" db="EMBL/GenBank/DDBJ databases">
        <title>Complete sequence of chromosome of Geopacillus sp. WCH70.</title>
        <authorList>
            <consortium name="US DOE Joint Genome Institute"/>
            <person name="Lucas S."/>
            <person name="Copeland A."/>
            <person name="Lapidus A."/>
            <person name="Glavina del Rio T."/>
            <person name="Dalin E."/>
            <person name="Tice H."/>
            <person name="Bruce D."/>
            <person name="Goodwin L."/>
            <person name="Pitluck S."/>
            <person name="Chertkov O."/>
            <person name="Brettin T."/>
            <person name="Detter J.C."/>
            <person name="Han C."/>
            <person name="Larimer F."/>
            <person name="Land M."/>
            <person name="Hauser L."/>
            <person name="Kyrpides N."/>
            <person name="Mikhailova N."/>
            <person name="Brumm P."/>
            <person name="Mead D.A."/>
            <person name="Richardson P."/>
        </authorList>
    </citation>
    <scope>NUCLEOTIDE SEQUENCE [LARGE SCALE GENOMIC DNA]</scope>
    <source>
        <strain>WCH70</strain>
    </source>
</reference>
<accession>C5D4R3</accession>
<gene>
    <name evidence="1" type="primary">ispH</name>
    <name type="ordered locus">GWCH70_2409</name>
</gene>
<keyword id="KW-0004">4Fe-4S</keyword>
<keyword id="KW-0408">Iron</keyword>
<keyword id="KW-0411">Iron-sulfur</keyword>
<keyword id="KW-0414">Isoprene biosynthesis</keyword>
<keyword id="KW-0479">Metal-binding</keyword>
<keyword id="KW-0560">Oxidoreductase</keyword>
<dbReference type="EC" id="1.17.7.4" evidence="1"/>
<dbReference type="EMBL" id="CP001638">
    <property type="protein sequence ID" value="ACS25105.1"/>
    <property type="molecule type" value="Genomic_DNA"/>
</dbReference>
<dbReference type="SMR" id="C5D4R3"/>
<dbReference type="STRING" id="471223.GWCH70_2409"/>
<dbReference type="KEGG" id="gwc:GWCH70_2409"/>
<dbReference type="eggNOG" id="COG0761">
    <property type="taxonomic scope" value="Bacteria"/>
</dbReference>
<dbReference type="HOGENOM" id="CLU_027486_0_0_9"/>
<dbReference type="OrthoDB" id="9777362at2"/>
<dbReference type="UniPathway" id="UPA00056">
    <property type="reaction ID" value="UER00097"/>
</dbReference>
<dbReference type="UniPathway" id="UPA00059">
    <property type="reaction ID" value="UER00105"/>
</dbReference>
<dbReference type="GO" id="GO:0051539">
    <property type="term" value="F:4 iron, 4 sulfur cluster binding"/>
    <property type="evidence" value="ECO:0007669"/>
    <property type="project" value="UniProtKB-UniRule"/>
</dbReference>
<dbReference type="GO" id="GO:0051745">
    <property type="term" value="F:4-hydroxy-3-methylbut-2-enyl diphosphate reductase activity"/>
    <property type="evidence" value="ECO:0007669"/>
    <property type="project" value="UniProtKB-UniRule"/>
</dbReference>
<dbReference type="GO" id="GO:0046872">
    <property type="term" value="F:metal ion binding"/>
    <property type="evidence" value="ECO:0007669"/>
    <property type="project" value="UniProtKB-KW"/>
</dbReference>
<dbReference type="GO" id="GO:0050992">
    <property type="term" value="P:dimethylallyl diphosphate biosynthetic process"/>
    <property type="evidence" value="ECO:0007669"/>
    <property type="project" value="UniProtKB-UniRule"/>
</dbReference>
<dbReference type="GO" id="GO:0019288">
    <property type="term" value="P:isopentenyl diphosphate biosynthetic process, methylerythritol 4-phosphate pathway"/>
    <property type="evidence" value="ECO:0007669"/>
    <property type="project" value="UniProtKB-UniRule"/>
</dbReference>
<dbReference type="GO" id="GO:0016114">
    <property type="term" value="P:terpenoid biosynthetic process"/>
    <property type="evidence" value="ECO:0007669"/>
    <property type="project" value="UniProtKB-UniRule"/>
</dbReference>
<dbReference type="CDD" id="cd13944">
    <property type="entry name" value="lytB_ispH"/>
    <property type="match status" value="1"/>
</dbReference>
<dbReference type="Gene3D" id="3.40.50.11270">
    <property type="match status" value="1"/>
</dbReference>
<dbReference type="Gene3D" id="3.40.1010.20">
    <property type="entry name" value="4-hydroxy-3-methylbut-2-enyl diphosphate reductase, catalytic domain"/>
    <property type="match status" value="2"/>
</dbReference>
<dbReference type="HAMAP" id="MF_00191">
    <property type="entry name" value="IspH"/>
    <property type="match status" value="1"/>
</dbReference>
<dbReference type="InterPro" id="IPR003451">
    <property type="entry name" value="LytB/IspH"/>
</dbReference>
<dbReference type="NCBIfam" id="TIGR00216">
    <property type="entry name" value="ispH_lytB"/>
    <property type="match status" value="1"/>
</dbReference>
<dbReference type="NCBIfam" id="NF002187">
    <property type="entry name" value="PRK01045.1-1"/>
    <property type="match status" value="1"/>
</dbReference>
<dbReference type="PANTHER" id="PTHR30426">
    <property type="entry name" value="4-HYDROXY-3-METHYLBUT-2-ENYL DIPHOSPHATE REDUCTASE"/>
    <property type="match status" value="1"/>
</dbReference>
<dbReference type="PANTHER" id="PTHR30426:SF0">
    <property type="entry name" value="4-HYDROXY-3-METHYLBUT-2-ENYL DIPHOSPHATE REDUCTASE"/>
    <property type="match status" value="1"/>
</dbReference>
<dbReference type="Pfam" id="PF02401">
    <property type="entry name" value="LYTB"/>
    <property type="match status" value="1"/>
</dbReference>